<gene>
    <name evidence="1" type="primary">cysI</name>
    <name type="ordered locus">VCM66_0370</name>
</gene>
<accession>C3LRB7</accession>
<feature type="chain" id="PRO_1000185235" description="Sulfite reductase [NADPH] hemoprotein beta-component">
    <location>
        <begin position="1"/>
        <end position="577"/>
    </location>
</feature>
<feature type="binding site" evidence="1">
    <location>
        <position position="440"/>
    </location>
    <ligand>
        <name>[4Fe-4S] cluster</name>
        <dbReference type="ChEBI" id="CHEBI:49883"/>
    </ligand>
</feature>
<feature type="binding site" evidence="1">
    <location>
        <position position="446"/>
    </location>
    <ligand>
        <name>[4Fe-4S] cluster</name>
        <dbReference type="ChEBI" id="CHEBI:49883"/>
    </ligand>
</feature>
<feature type="binding site" evidence="1">
    <location>
        <position position="486"/>
    </location>
    <ligand>
        <name>[4Fe-4S] cluster</name>
        <dbReference type="ChEBI" id="CHEBI:49883"/>
    </ligand>
</feature>
<feature type="binding site" evidence="1">
    <location>
        <position position="490"/>
    </location>
    <ligand>
        <name>[4Fe-4S] cluster</name>
        <dbReference type="ChEBI" id="CHEBI:49883"/>
    </ligand>
</feature>
<feature type="binding site" description="axial binding residue" evidence="1">
    <location>
        <position position="490"/>
    </location>
    <ligand>
        <name>siroheme</name>
        <dbReference type="ChEBI" id="CHEBI:60052"/>
    </ligand>
    <ligandPart>
        <name>Fe</name>
        <dbReference type="ChEBI" id="CHEBI:18248"/>
    </ligandPart>
</feature>
<proteinExistence type="inferred from homology"/>
<protein>
    <recommendedName>
        <fullName evidence="1">Sulfite reductase [NADPH] hemoprotein beta-component</fullName>
        <shortName evidence="1">SiR-HP</shortName>
        <shortName evidence="1">SiRHP</shortName>
        <ecNumber evidence="1">1.8.1.2</ecNumber>
    </recommendedName>
</protein>
<sequence length="577" mass="64378">MSANQNPSVQEVLGEVLGPWSDNERLKRESHFLRGTIEQDLQDRITGGFTADNFQLIRFHGMYQQDDRDIRAERSKQKLEPLHNVMLRARMPGGIITPHQWLAIDKFATEHTLYGSIRLTTRQTFQFHGVLKPNIKLMHQTLNSIGIDSIATAGDVNRNVLCTSNPVESELHLQAYEWAKKISEHLLPKTRAYAEIWLDGEKIEGPDEEPILGSNYLPRKFKTTVVIPPHNDVDVHANDLNFVAIGENGQLVGFNVLVGGGLAMTHGDTSTYPRRADDFGFIPLEKTLEVAAAVVSTQRDWGNRSNRKNAKTKYTLDRVGVEVFKAEVEKRAGITFAPSRAYEFTSRGDRIGWVEGIDGKHHLTLFIENGRILDFPGKPLKTGVAEIAKVHQGDFRMTANQNLIVAGVPADQKPHIEQLAREHGLIDDGVSEQRINSMACVAFPTCPLAMAEAERFLPSFVTEVEGILAKHALPKEENIILRVTGCPNGCGRAMLAEIGLVGKAPGRYNLHLGGNRNGTRIPKMYKENITDTQILQEIDELVGRWASERLDGEGFGDFTIRAGIIEEVIISKRDFYA</sequence>
<comment type="function">
    <text evidence="1">Component of the sulfite reductase complex that catalyzes the 6-electron reduction of sulfite to sulfide. This is one of several activities required for the biosynthesis of L-cysteine from sulfate.</text>
</comment>
<comment type="catalytic activity">
    <reaction evidence="1">
        <text>hydrogen sulfide + 3 NADP(+) + 3 H2O = sulfite + 3 NADPH + 4 H(+)</text>
        <dbReference type="Rhea" id="RHEA:13801"/>
        <dbReference type="ChEBI" id="CHEBI:15377"/>
        <dbReference type="ChEBI" id="CHEBI:15378"/>
        <dbReference type="ChEBI" id="CHEBI:17359"/>
        <dbReference type="ChEBI" id="CHEBI:29919"/>
        <dbReference type="ChEBI" id="CHEBI:57783"/>
        <dbReference type="ChEBI" id="CHEBI:58349"/>
        <dbReference type="EC" id="1.8.1.2"/>
    </reaction>
</comment>
<comment type="cofactor">
    <cofactor evidence="1">
        <name>siroheme</name>
        <dbReference type="ChEBI" id="CHEBI:60052"/>
    </cofactor>
    <text evidence="1">Binds 1 siroheme per subunit.</text>
</comment>
<comment type="cofactor">
    <cofactor evidence="1">
        <name>[4Fe-4S] cluster</name>
        <dbReference type="ChEBI" id="CHEBI:49883"/>
    </cofactor>
    <text evidence="1">Binds 1 [4Fe-4S] cluster per subunit.</text>
</comment>
<comment type="pathway">
    <text evidence="1">Sulfur metabolism; hydrogen sulfide biosynthesis; hydrogen sulfide from sulfite (NADPH route): step 1/1.</text>
</comment>
<comment type="subunit">
    <text evidence="1">Alpha(8)-beta(8). The alpha component is a flavoprotein, the beta component is a hemoprotein.</text>
</comment>
<comment type="similarity">
    <text evidence="1">Belongs to the nitrite and sulfite reductase 4Fe-4S domain family.</text>
</comment>
<keyword id="KW-0004">4Fe-4S</keyword>
<keyword id="KW-0028">Amino-acid biosynthesis</keyword>
<keyword id="KW-0198">Cysteine biosynthesis</keyword>
<keyword id="KW-0349">Heme</keyword>
<keyword id="KW-0408">Iron</keyword>
<keyword id="KW-0411">Iron-sulfur</keyword>
<keyword id="KW-0479">Metal-binding</keyword>
<keyword id="KW-0521">NADP</keyword>
<keyword id="KW-0560">Oxidoreductase</keyword>
<name>CYSI_VIBCM</name>
<dbReference type="EC" id="1.8.1.2" evidence="1"/>
<dbReference type="EMBL" id="CP001233">
    <property type="protein sequence ID" value="ACP04697.1"/>
    <property type="molecule type" value="Genomic_DNA"/>
</dbReference>
<dbReference type="RefSeq" id="WP_001275671.1">
    <property type="nucleotide sequence ID" value="NC_012578.1"/>
</dbReference>
<dbReference type="SMR" id="C3LRB7"/>
<dbReference type="KEGG" id="vcm:VCM66_0370"/>
<dbReference type="HOGENOM" id="CLU_001975_3_2_6"/>
<dbReference type="UniPathway" id="UPA00140">
    <property type="reaction ID" value="UER00207"/>
</dbReference>
<dbReference type="Proteomes" id="UP000001217">
    <property type="component" value="Chromosome I"/>
</dbReference>
<dbReference type="GO" id="GO:0009337">
    <property type="term" value="C:sulfite reductase complex (NADPH)"/>
    <property type="evidence" value="ECO:0007669"/>
    <property type="project" value="InterPro"/>
</dbReference>
<dbReference type="GO" id="GO:0051539">
    <property type="term" value="F:4 iron, 4 sulfur cluster binding"/>
    <property type="evidence" value="ECO:0007669"/>
    <property type="project" value="UniProtKB-KW"/>
</dbReference>
<dbReference type="GO" id="GO:0020037">
    <property type="term" value="F:heme binding"/>
    <property type="evidence" value="ECO:0007669"/>
    <property type="project" value="InterPro"/>
</dbReference>
<dbReference type="GO" id="GO:0046872">
    <property type="term" value="F:metal ion binding"/>
    <property type="evidence" value="ECO:0007669"/>
    <property type="project" value="UniProtKB-KW"/>
</dbReference>
<dbReference type="GO" id="GO:0050661">
    <property type="term" value="F:NADP binding"/>
    <property type="evidence" value="ECO:0007669"/>
    <property type="project" value="InterPro"/>
</dbReference>
<dbReference type="GO" id="GO:0050311">
    <property type="term" value="F:sulfite reductase (ferredoxin) activity"/>
    <property type="evidence" value="ECO:0007669"/>
    <property type="project" value="TreeGrafter"/>
</dbReference>
<dbReference type="GO" id="GO:0004783">
    <property type="term" value="F:sulfite reductase (NADPH) activity"/>
    <property type="evidence" value="ECO:0007669"/>
    <property type="project" value="UniProtKB-UniRule"/>
</dbReference>
<dbReference type="GO" id="GO:0019344">
    <property type="term" value="P:cysteine biosynthetic process"/>
    <property type="evidence" value="ECO:0007669"/>
    <property type="project" value="UniProtKB-KW"/>
</dbReference>
<dbReference type="GO" id="GO:0070814">
    <property type="term" value="P:hydrogen sulfide biosynthetic process"/>
    <property type="evidence" value="ECO:0007669"/>
    <property type="project" value="UniProtKB-UniRule"/>
</dbReference>
<dbReference type="GO" id="GO:0000103">
    <property type="term" value="P:sulfate assimilation"/>
    <property type="evidence" value="ECO:0007669"/>
    <property type="project" value="UniProtKB-UniRule"/>
</dbReference>
<dbReference type="FunFam" id="3.30.413.10:FF:000003">
    <property type="entry name" value="Sulfite reductase [NADPH] hemoprotein beta-component"/>
    <property type="match status" value="1"/>
</dbReference>
<dbReference type="FunFam" id="3.30.413.10:FF:000004">
    <property type="entry name" value="Sulfite reductase [NADPH] hemoprotein beta-component"/>
    <property type="match status" value="1"/>
</dbReference>
<dbReference type="Gene3D" id="3.30.413.10">
    <property type="entry name" value="Sulfite Reductase Hemoprotein, domain 1"/>
    <property type="match status" value="2"/>
</dbReference>
<dbReference type="HAMAP" id="MF_01540">
    <property type="entry name" value="CysI"/>
    <property type="match status" value="1"/>
</dbReference>
<dbReference type="InterPro" id="IPR011786">
    <property type="entry name" value="CysI"/>
</dbReference>
<dbReference type="InterPro" id="IPR005117">
    <property type="entry name" value="NiRdtase/SiRdtase_haem-b_fer"/>
</dbReference>
<dbReference type="InterPro" id="IPR036136">
    <property type="entry name" value="Nit/Sulf_reduc_fer-like_dom_sf"/>
</dbReference>
<dbReference type="InterPro" id="IPR006067">
    <property type="entry name" value="NO2/SO3_Rdtase_4Fe4S_dom"/>
</dbReference>
<dbReference type="InterPro" id="IPR045169">
    <property type="entry name" value="NO2/SO3_Rdtase_4Fe4S_prot"/>
</dbReference>
<dbReference type="InterPro" id="IPR045854">
    <property type="entry name" value="NO2/SO3_Rdtase_4Fe4S_sf"/>
</dbReference>
<dbReference type="InterPro" id="IPR006066">
    <property type="entry name" value="NO2/SO3_Rdtase_FeS/sirohaem_BS"/>
</dbReference>
<dbReference type="NCBIfam" id="TIGR02041">
    <property type="entry name" value="CysI"/>
    <property type="match status" value="1"/>
</dbReference>
<dbReference type="NCBIfam" id="NF010029">
    <property type="entry name" value="PRK13504.1"/>
    <property type="match status" value="1"/>
</dbReference>
<dbReference type="PANTHER" id="PTHR11493:SF47">
    <property type="entry name" value="SULFITE REDUCTASE [NADPH] SUBUNIT BETA"/>
    <property type="match status" value="1"/>
</dbReference>
<dbReference type="PANTHER" id="PTHR11493">
    <property type="entry name" value="SULFITE REDUCTASE [NADPH] SUBUNIT BETA-RELATED"/>
    <property type="match status" value="1"/>
</dbReference>
<dbReference type="Pfam" id="PF01077">
    <property type="entry name" value="NIR_SIR"/>
    <property type="match status" value="1"/>
</dbReference>
<dbReference type="Pfam" id="PF03460">
    <property type="entry name" value="NIR_SIR_ferr"/>
    <property type="match status" value="2"/>
</dbReference>
<dbReference type="PRINTS" id="PR00397">
    <property type="entry name" value="SIROHAEM"/>
</dbReference>
<dbReference type="SUPFAM" id="SSF56014">
    <property type="entry name" value="Nitrite and sulphite reductase 4Fe-4S domain-like"/>
    <property type="match status" value="2"/>
</dbReference>
<dbReference type="SUPFAM" id="SSF55124">
    <property type="entry name" value="Nitrite/Sulfite reductase N-terminal domain-like"/>
    <property type="match status" value="2"/>
</dbReference>
<dbReference type="PROSITE" id="PS00365">
    <property type="entry name" value="NIR_SIR"/>
    <property type="match status" value="1"/>
</dbReference>
<evidence type="ECO:0000255" key="1">
    <source>
        <dbReference type="HAMAP-Rule" id="MF_01540"/>
    </source>
</evidence>
<reference key="1">
    <citation type="journal article" date="2008" name="PLoS ONE">
        <title>A recalibrated molecular clock and independent origins for the cholera pandemic clones.</title>
        <authorList>
            <person name="Feng L."/>
            <person name="Reeves P.R."/>
            <person name="Lan R."/>
            <person name="Ren Y."/>
            <person name="Gao C."/>
            <person name="Zhou Z."/>
            <person name="Ren Y."/>
            <person name="Cheng J."/>
            <person name="Wang W."/>
            <person name="Wang J."/>
            <person name="Qian W."/>
            <person name="Li D."/>
            <person name="Wang L."/>
        </authorList>
    </citation>
    <scope>NUCLEOTIDE SEQUENCE [LARGE SCALE GENOMIC DNA]</scope>
    <source>
        <strain>M66-2</strain>
    </source>
</reference>
<organism>
    <name type="scientific">Vibrio cholerae serotype O1 (strain M66-2)</name>
    <dbReference type="NCBI Taxonomy" id="579112"/>
    <lineage>
        <taxon>Bacteria</taxon>
        <taxon>Pseudomonadati</taxon>
        <taxon>Pseudomonadota</taxon>
        <taxon>Gammaproteobacteria</taxon>
        <taxon>Vibrionales</taxon>
        <taxon>Vibrionaceae</taxon>
        <taxon>Vibrio</taxon>
    </lineage>
</organism>